<organism>
    <name type="scientific">Buchnera aphidicola subsp. Acyrthosiphon pisum (strain 5A)</name>
    <dbReference type="NCBI Taxonomy" id="563178"/>
    <lineage>
        <taxon>Bacteria</taxon>
        <taxon>Pseudomonadati</taxon>
        <taxon>Pseudomonadota</taxon>
        <taxon>Gammaproteobacteria</taxon>
        <taxon>Enterobacterales</taxon>
        <taxon>Erwiniaceae</taxon>
        <taxon>Buchnera</taxon>
    </lineage>
</organism>
<proteinExistence type="inferred from homology"/>
<protein>
    <recommendedName>
        <fullName evidence="1">Elongation factor G</fullName>
        <shortName evidence="1">EF-G</shortName>
    </recommendedName>
</protein>
<reference key="1">
    <citation type="journal article" date="2009" name="Science">
        <title>The dynamics and time scale of ongoing genomic erosion in symbiotic bacteria.</title>
        <authorList>
            <person name="Moran N.A."/>
            <person name="McLaughlin H.J."/>
            <person name="Sorek R."/>
        </authorList>
    </citation>
    <scope>NUCLEOTIDE SEQUENCE [LARGE SCALE GENOMIC DNA]</scope>
    <source>
        <strain>5A</strain>
    </source>
</reference>
<name>EFG_BUCA5</name>
<sequence length="702" mass="78183">MSRTTPISRYRNIGISAHIDAGKTTTTERILFYTGINHKIGEVHDGAATMDWMEQEQERGITITSAATTTFWSGMAKQFKPHRINIIDTPGHVDFTIEVERSMRVLDGAVMVYCAVGGVQPQSETVWRQANKYNVPRIAFVNKMDRMGANFLKVVKQIKIRLGANPVPLQLAIGAEDTFVGVVDLIKMKAVHWKDSDQGVTFVYNDIPPEMIELSKKWNQNLIESAVESNEDLLEKYLNGDRLSESEIKSALRKRALNNEIVLITCGSAFKNKGVQALLDAIIEFLPAPNDIQDIKGILNDVEQTPAIRNSDDKAPFSALAFKIASDPFVGNLTFFRVYSGVVKSGDTVFNSAKSQRERFGRIVQMHANKREEIKEVYAGDIAAAIGLKDVTTGDTLCDLNDPIILERMEFPEPVISISVEPKTKVDQEKMGLALGRLAKEDPSFRVRTDQESNQTIISGMGELHLEIIIDRMKREFSVDANVGKPQVAYRETILNKVEDIEGKHIKQSGGRGQYGHVVIELFPLQPGGEGYLFVNDIKGGVIPSEYISAIDKGIQEQLKCGPLAGYPVVDIGVRLYFGSYHDVDSSELAFKLAASAAFKKGFKQAKPILLEPIMKVEVETPDDYMGDVIGDLNRRRGIIEGMKDLSISKIINACVPLSEMFGYATDLRSQTQGRASYSMEFLKYIEAPFNISKDIIERREK</sequence>
<comment type="function">
    <text evidence="1">Catalyzes the GTP-dependent ribosomal translocation step during translation elongation. During this step, the ribosome changes from the pre-translocational (PRE) to the post-translocational (POST) state as the newly formed A-site-bound peptidyl-tRNA and P-site-bound deacylated tRNA move to the P and E sites, respectively. Catalyzes the coordinated movement of the two tRNA molecules, the mRNA and conformational changes in the ribosome.</text>
</comment>
<comment type="subcellular location">
    <subcellularLocation>
        <location evidence="1">Cytoplasm</location>
    </subcellularLocation>
</comment>
<comment type="similarity">
    <text evidence="1">Belongs to the TRAFAC class translation factor GTPase superfamily. Classic translation factor GTPase family. EF-G/EF-2 subfamily.</text>
</comment>
<evidence type="ECO:0000255" key="1">
    <source>
        <dbReference type="HAMAP-Rule" id="MF_00054"/>
    </source>
</evidence>
<feature type="chain" id="PRO_1000201443" description="Elongation factor G">
    <location>
        <begin position="1"/>
        <end position="702"/>
    </location>
</feature>
<feature type="domain" description="tr-type G">
    <location>
        <begin position="8"/>
        <end position="290"/>
    </location>
</feature>
<feature type="binding site" evidence="1">
    <location>
        <begin position="17"/>
        <end position="24"/>
    </location>
    <ligand>
        <name>GTP</name>
        <dbReference type="ChEBI" id="CHEBI:37565"/>
    </ligand>
</feature>
<feature type="binding site" evidence="1">
    <location>
        <begin position="88"/>
        <end position="92"/>
    </location>
    <ligand>
        <name>GTP</name>
        <dbReference type="ChEBI" id="CHEBI:37565"/>
    </ligand>
</feature>
<feature type="binding site" evidence="1">
    <location>
        <begin position="142"/>
        <end position="145"/>
    </location>
    <ligand>
        <name>GTP</name>
        <dbReference type="ChEBI" id="CHEBI:37565"/>
    </ligand>
</feature>
<keyword id="KW-0963">Cytoplasm</keyword>
<keyword id="KW-0251">Elongation factor</keyword>
<keyword id="KW-0342">GTP-binding</keyword>
<keyword id="KW-0547">Nucleotide-binding</keyword>
<keyword id="KW-0648">Protein biosynthesis</keyword>
<gene>
    <name evidence="1" type="primary">fusA</name>
    <name type="ordered locus">BUAP5A_520</name>
</gene>
<accession>B8D9V0</accession>
<dbReference type="EMBL" id="CP001161">
    <property type="protein sequence ID" value="ACL30871.1"/>
    <property type="molecule type" value="Genomic_DNA"/>
</dbReference>
<dbReference type="RefSeq" id="WP_009874478.1">
    <property type="nucleotide sequence ID" value="NC_011833.1"/>
</dbReference>
<dbReference type="SMR" id="B8D9V0"/>
<dbReference type="KEGG" id="bap:BUAP5A_520"/>
<dbReference type="HOGENOM" id="CLU_002794_4_1_6"/>
<dbReference type="OrthoDB" id="9804431at2"/>
<dbReference type="Proteomes" id="UP000006904">
    <property type="component" value="Chromosome"/>
</dbReference>
<dbReference type="GO" id="GO:0005737">
    <property type="term" value="C:cytoplasm"/>
    <property type="evidence" value="ECO:0007669"/>
    <property type="project" value="UniProtKB-SubCell"/>
</dbReference>
<dbReference type="GO" id="GO:0005525">
    <property type="term" value="F:GTP binding"/>
    <property type="evidence" value="ECO:0007669"/>
    <property type="project" value="UniProtKB-UniRule"/>
</dbReference>
<dbReference type="GO" id="GO:0003924">
    <property type="term" value="F:GTPase activity"/>
    <property type="evidence" value="ECO:0007669"/>
    <property type="project" value="InterPro"/>
</dbReference>
<dbReference type="GO" id="GO:0097216">
    <property type="term" value="F:guanosine tetraphosphate binding"/>
    <property type="evidence" value="ECO:0007669"/>
    <property type="project" value="UniProtKB-ARBA"/>
</dbReference>
<dbReference type="GO" id="GO:0003746">
    <property type="term" value="F:translation elongation factor activity"/>
    <property type="evidence" value="ECO:0007669"/>
    <property type="project" value="UniProtKB-UniRule"/>
</dbReference>
<dbReference type="GO" id="GO:0032790">
    <property type="term" value="P:ribosome disassembly"/>
    <property type="evidence" value="ECO:0007669"/>
    <property type="project" value="TreeGrafter"/>
</dbReference>
<dbReference type="CDD" id="cd01886">
    <property type="entry name" value="EF-G"/>
    <property type="match status" value="1"/>
</dbReference>
<dbReference type="CDD" id="cd16262">
    <property type="entry name" value="EFG_III"/>
    <property type="match status" value="1"/>
</dbReference>
<dbReference type="CDD" id="cd01434">
    <property type="entry name" value="EFG_mtEFG1_IV"/>
    <property type="match status" value="1"/>
</dbReference>
<dbReference type="CDD" id="cd03713">
    <property type="entry name" value="EFG_mtEFG_C"/>
    <property type="match status" value="1"/>
</dbReference>
<dbReference type="CDD" id="cd04088">
    <property type="entry name" value="EFG_mtEFG_II"/>
    <property type="match status" value="1"/>
</dbReference>
<dbReference type="FunFam" id="2.40.30.10:FF:000006">
    <property type="entry name" value="Elongation factor G"/>
    <property type="match status" value="1"/>
</dbReference>
<dbReference type="FunFam" id="3.30.230.10:FF:000003">
    <property type="entry name" value="Elongation factor G"/>
    <property type="match status" value="1"/>
</dbReference>
<dbReference type="FunFam" id="3.30.70.240:FF:000001">
    <property type="entry name" value="Elongation factor G"/>
    <property type="match status" value="1"/>
</dbReference>
<dbReference type="FunFam" id="3.30.70.870:FF:000001">
    <property type="entry name" value="Elongation factor G"/>
    <property type="match status" value="1"/>
</dbReference>
<dbReference type="FunFam" id="3.40.50.300:FF:000029">
    <property type="entry name" value="Elongation factor G"/>
    <property type="match status" value="1"/>
</dbReference>
<dbReference type="Gene3D" id="3.30.230.10">
    <property type="match status" value="1"/>
</dbReference>
<dbReference type="Gene3D" id="3.30.70.240">
    <property type="match status" value="1"/>
</dbReference>
<dbReference type="Gene3D" id="3.30.70.870">
    <property type="entry name" value="Elongation Factor G (Translational Gtpase), domain 3"/>
    <property type="match status" value="1"/>
</dbReference>
<dbReference type="Gene3D" id="3.40.50.300">
    <property type="entry name" value="P-loop containing nucleotide triphosphate hydrolases"/>
    <property type="match status" value="1"/>
</dbReference>
<dbReference type="Gene3D" id="2.40.30.10">
    <property type="entry name" value="Translation factors"/>
    <property type="match status" value="1"/>
</dbReference>
<dbReference type="HAMAP" id="MF_00054_B">
    <property type="entry name" value="EF_G_EF_2_B"/>
    <property type="match status" value="1"/>
</dbReference>
<dbReference type="InterPro" id="IPR041095">
    <property type="entry name" value="EFG_II"/>
</dbReference>
<dbReference type="InterPro" id="IPR009022">
    <property type="entry name" value="EFG_III"/>
</dbReference>
<dbReference type="InterPro" id="IPR035647">
    <property type="entry name" value="EFG_III/V"/>
</dbReference>
<dbReference type="InterPro" id="IPR047872">
    <property type="entry name" value="EFG_IV"/>
</dbReference>
<dbReference type="InterPro" id="IPR035649">
    <property type="entry name" value="EFG_V"/>
</dbReference>
<dbReference type="InterPro" id="IPR000640">
    <property type="entry name" value="EFG_V-like"/>
</dbReference>
<dbReference type="InterPro" id="IPR004161">
    <property type="entry name" value="EFTu-like_2"/>
</dbReference>
<dbReference type="InterPro" id="IPR031157">
    <property type="entry name" value="G_TR_CS"/>
</dbReference>
<dbReference type="InterPro" id="IPR027417">
    <property type="entry name" value="P-loop_NTPase"/>
</dbReference>
<dbReference type="InterPro" id="IPR020568">
    <property type="entry name" value="Ribosomal_Su5_D2-typ_SF"/>
</dbReference>
<dbReference type="InterPro" id="IPR014721">
    <property type="entry name" value="Ribsml_uS5_D2-typ_fold_subgr"/>
</dbReference>
<dbReference type="InterPro" id="IPR005225">
    <property type="entry name" value="Small_GTP-bd"/>
</dbReference>
<dbReference type="InterPro" id="IPR000795">
    <property type="entry name" value="T_Tr_GTP-bd_dom"/>
</dbReference>
<dbReference type="InterPro" id="IPR009000">
    <property type="entry name" value="Transl_B-barrel_sf"/>
</dbReference>
<dbReference type="InterPro" id="IPR004540">
    <property type="entry name" value="Transl_elong_EFG/EF2"/>
</dbReference>
<dbReference type="InterPro" id="IPR005517">
    <property type="entry name" value="Transl_elong_EFG/EF2_IV"/>
</dbReference>
<dbReference type="NCBIfam" id="TIGR00484">
    <property type="entry name" value="EF-G"/>
    <property type="match status" value="1"/>
</dbReference>
<dbReference type="NCBIfam" id="NF009381">
    <property type="entry name" value="PRK12740.1-5"/>
    <property type="match status" value="1"/>
</dbReference>
<dbReference type="NCBIfam" id="TIGR00231">
    <property type="entry name" value="small_GTP"/>
    <property type="match status" value="1"/>
</dbReference>
<dbReference type="PANTHER" id="PTHR43261:SF1">
    <property type="entry name" value="RIBOSOME-RELEASING FACTOR 2, MITOCHONDRIAL"/>
    <property type="match status" value="1"/>
</dbReference>
<dbReference type="PANTHER" id="PTHR43261">
    <property type="entry name" value="TRANSLATION ELONGATION FACTOR G-RELATED"/>
    <property type="match status" value="1"/>
</dbReference>
<dbReference type="Pfam" id="PF00679">
    <property type="entry name" value="EFG_C"/>
    <property type="match status" value="1"/>
</dbReference>
<dbReference type="Pfam" id="PF14492">
    <property type="entry name" value="EFG_III"/>
    <property type="match status" value="1"/>
</dbReference>
<dbReference type="Pfam" id="PF03764">
    <property type="entry name" value="EFG_IV"/>
    <property type="match status" value="1"/>
</dbReference>
<dbReference type="Pfam" id="PF00009">
    <property type="entry name" value="GTP_EFTU"/>
    <property type="match status" value="1"/>
</dbReference>
<dbReference type="Pfam" id="PF03144">
    <property type="entry name" value="GTP_EFTU_D2"/>
    <property type="match status" value="1"/>
</dbReference>
<dbReference type="PRINTS" id="PR00315">
    <property type="entry name" value="ELONGATNFCT"/>
</dbReference>
<dbReference type="SMART" id="SM00838">
    <property type="entry name" value="EFG_C"/>
    <property type="match status" value="1"/>
</dbReference>
<dbReference type="SMART" id="SM00889">
    <property type="entry name" value="EFG_IV"/>
    <property type="match status" value="1"/>
</dbReference>
<dbReference type="SUPFAM" id="SSF54980">
    <property type="entry name" value="EF-G C-terminal domain-like"/>
    <property type="match status" value="2"/>
</dbReference>
<dbReference type="SUPFAM" id="SSF52540">
    <property type="entry name" value="P-loop containing nucleoside triphosphate hydrolases"/>
    <property type="match status" value="1"/>
</dbReference>
<dbReference type="SUPFAM" id="SSF54211">
    <property type="entry name" value="Ribosomal protein S5 domain 2-like"/>
    <property type="match status" value="1"/>
</dbReference>
<dbReference type="SUPFAM" id="SSF50447">
    <property type="entry name" value="Translation proteins"/>
    <property type="match status" value="1"/>
</dbReference>
<dbReference type="PROSITE" id="PS00301">
    <property type="entry name" value="G_TR_1"/>
    <property type="match status" value="1"/>
</dbReference>
<dbReference type="PROSITE" id="PS51722">
    <property type="entry name" value="G_TR_2"/>
    <property type="match status" value="1"/>
</dbReference>